<evidence type="ECO:0000255" key="1">
    <source>
        <dbReference type="HAMAP-Rule" id="MF_00208"/>
    </source>
</evidence>
<organism>
    <name type="scientific">Staphylococcus aureus (strain bovine RF122 / ET3-1)</name>
    <dbReference type="NCBI Taxonomy" id="273036"/>
    <lineage>
        <taxon>Bacteria</taxon>
        <taxon>Bacillati</taxon>
        <taxon>Bacillota</taxon>
        <taxon>Bacilli</taxon>
        <taxon>Bacillales</taxon>
        <taxon>Staphylococcaceae</taxon>
        <taxon>Staphylococcus</taxon>
    </lineage>
</organism>
<sequence length="494" mass="54133">MDASTLFKKVKVKRVLGSLEQQIDDITTDSRTAREGSIFVASVGYTVDSHKFCQSVADQGCKLVVVNKEQSLPANVTQVVVPDTLRVASILAHTLFDYPSHQLVTFGVTGTNGKTSIATMIHLIQRKLQKNSAYLGTNGFQINETKTKGANTTPETVSLTKKIKEAVDAGAESMTLEVSSHGLVLGRLRGVEFDVAIFSNLTQDHLDFHGTMEAYGHAKSLLFSQLGEDLSKEKYVVLNNDDSFSEYLRTVTPYEVFSYGIDEEAQFMAENIQESLQGVSFDFVTPFGTYPVKSPYVGKFNISNIMAAMIAVWSKGTSLETIIKAVENLEPVEGRLEVLDPSLPIDLIIDYAHTADGMNKLIDAVQPFVKQKLIFLVGMAGERDLTKTPEMGRVACRADYVIFTPDNPANDDPKMLTAELAKGATHQNYIEFDDRAEGIKHAIDIAEPGDTVVLASKGREPYQIMPGHIKVPHRDDLIGLEAAYKKFGGGPVGQ</sequence>
<name>MURE_STAAB</name>
<dbReference type="EC" id="6.3.2.7" evidence="1"/>
<dbReference type="EMBL" id="AJ938182">
    <property type="protein sequence ID" value="CAI80572.1"/>
    <property type="molecule type" value="Genomic_DNA"/>
</dbReference>
<dbReference type="RefSeq" id="WP_000340126.1">
    <property type="nucleotide sequence ID" value="NC_007622.1"/>
</dbReference>
<dbReference type="SMR" id="Q2YWY9"/>
<dbReference type="KEGG" id="sab:SAB0884"/>
<dbReference type="HOGENOM" id="CLU_022291_0_1_9"/>
<dbReference type="UniPathway" id="UPA00219"/>
<dbReference type="GO" id="GO:0005737">
    <property type="term" value="C:cytoplasm"/>
    <property type="evidence" value="ECO:0007669"/>
    <property type="project" value="UniProtKB-SubCell"/>
</dbReference>
<dbReference type="GO" id="GO:0005524">
    <property type="term" value="F:ATP binding"/>
    <property type="evidence" value="ECO:0007669"/>
    <property type="project" value="UniProtKB-UniRule"/>
</dbReference>
<dbReference type="GO" id="GO:0000287">
    <property type="term" value="F:magnesium ion binding"/>
    <property type="evidence" value="ECO:0007669"/>
    <property type="project" value="UniProtKB-UniRule"/>
</dbReference>
<dbReference type="GO" id="GO:0047482">
    <property type="term" value="F:UDP-N-acetylmuramoyl-L-alanyl-D-glutamate-L-lysine ligase activity"/>
    <property type="evidence" value="ECO:0007669"/>
    <property type="project" value="UniProtKB-UniRule"/>
</dbReference>
<dbReference type="GO" id="GO:0051301">
    <property type="term" value="P:cell division"/>
    <property type="evidence" value="ECO:0007669"/>
    <property type="project" value="UniProtKB-KW"/>
</dbReference>
<dbReference type="GO" id="GO:0071555">
    <property type="term" value="P:cell wall organization"/>
    <property type="evidence" value="ECO:0007669"/>
    <property type="project" value="UniProtKB-KW"/>
</dbReference>
<dbReference type="GO" id="GO:0009252">
    <property type="term" value="P:peptidoglycan biosynthetic process"/>
    <property type="evidence" value="ECO:0007669"/>
    <property type="project" value="UniProtKB-UniRule"/>
</dbReference>
<dbReference type="GO" id="GO:0008360">
    <property type="term" value="P:regulation of cell shape"/>
    <property type="evidence" value="ECO:0007669"/>
    <property type="project" value="UniProtKB-KW"/>
</dbReference>
<dbReference type="Gene3D" id="3.90.190.20">
    <property type="entry name" value="Mur ligase, C-terminal domain"/>
    <property type="match status" value="1"/>
</dbReference>
<dbReference type="Gene3D" id="3.40.1190.10">
    <property type="entry name" value="Mur-like, catalytic domain"/>
    <property type="match status" value="1"/>
</dbReference>
<dbReference type="Gene3D" id="3.40.1390.10">
    <property type="entry name" value="MurE/MurF, N-terminal domain"/>
    <property type="match status" value="1"/>
</dbReference>
<dbReference type="HAMAP" id="MF_00208">
    <property type="entry name" value="MurE"/>
    <property type="match status" value="1"/>
</dbReference>
<dbReference type="InterPro" id="IPR036565">
    <property type="entry name" value="Mur-like_cat_sf"/>
</dbReference>
<dbReference type="InterPro" id="IPR004101">
    <property type="entry name" value="Mur_ligase_C"/>
</dbReference>
<dbReference type="InterPro" id="IPR036615">
    <property type="entry name" value="Mur_ligase_C_dom_sf"/>
</dbReference>
<dbReference type="InterPro" id="IPR013221">
    <property type="entry name" value="Mur_ligase_cen"/>
</dbReference>
<dbReference type="InterPro" id="IPR035911">
    <property type="entry name" value="MurE/MurF_N"/>
</dbReference>
<dbReference type="InterPro" id="IPR005761">
    <property type="entry name" value="UDP-N-AcMur-Glu-dNH2Pim_ligase"/>
</dbReference>
<dbReference type="NCBIfam" id="TIGR01085">
    <property type="entry name" value="murE"/>
    <property type="match status" value="1"/>
</dbReference>
<dbReference type="NCBIfam" id="NF001126">
    <property type="entry name" value="PRK00139.1-4"/>
    <property type="match status" value="1"/>
</dbReference>
<dbReference type="NCBIfam" id="NF010628">
    <property type="entry name" value="PRK14022.1"/>
    <property type="match status" value="1"/>
</dbReference>
<dbReference type="PANTHER" id="PTHR23135">
    <property type="entry name" value="MUR LIGASE FAMILY MEMBER"/>
    <property type="match status" value="1"/>
</dbReference>
<dbReference type="PANTHER" id="PTHR23135:SF4">
    <property type="entry name" value="UDP-N-ACETYLMURAMOYL-L-ALANYL-D-GLUTAMATE--2,6-DIAMINOPIMELATE LIGASE MURE HOMOLOG, CHLOROPLASTIC"/>
    <property type="match status" value="1"/>
</dbReference>
<dbReference type="Pfam" id="PF02875">
    <property type="entry name" value="Mur_ligase_C"/>
    <property type="match status" value="1"/>
</dbReference>
<dbReference type="Pfam" id="PF08245">
    <property type="entry name" value="Mur_ligase_M"/>
    <property type="match status" value="1"/>
</dbReference>
<dbReference type="SUPFAM" id="SSF53623">
    <property type="entry name" value="MurD-like peptide ligases, catalytic domain"/>
    <property type="match status" value="1"/>
</dbReference>
<dbReference type="SUPFAM" id="SSF53244">
    <property type="entry name" value="MurD-like peptide ligases, peptide-binding domain"/>
    <property type="match status" value="1"/>
</dbReference>
<dbReference type="SUPFAM" id="SSF63418">
    <property type="entry name" value="MurE/MurF N-terminal domain"/>
    <property type="match status" value="1"/>
</dbReference>
<accession>Q2YWY9</accession>
<reference key="1">
    <citation type="journal article" date="2007" name="PLoS ONE">
        <title>Molecular correlates of host specialization in Staphylococcus aureus.</title>
        <authorList>
            <person name="Herron-Olson L."/>
            <person name="Fitzgerald J.R."/>
            <person name="Musser J.M."/>
            <person name="Kapur V."/>
        </authorList>
    </citation>
    <scope>NUCLEOTIDE SEQUENCE [LARGE SCALE GENOMIC DNA]</scope>
    <source>
        <strain>bovine RF122 / ET3-1</strain>
    </source>
</reference>
<protein>
    <recommendedName>
        <fullName evidence="1">UDP-N-acetylmuramoyl-L-alanyl-D-glutamate--L-lysine ligase</fullName>
        <ecNumber evidence="1">6.3.2.7</ecNumber>
    </recommendedName>
    <alternativeName>
        <fullName evidence="1">L-lysine-adding enzyme</fullName>
    </alternativeName>
    <alternativeName>
        <fullName evidence="1">UDP-MurNAc-L-Ala-D-Glu:L-Lys ligase</fullName>
    </alternativeName>
    <alternativeName>
        <fullName evidence="1">UDP-MurNAc-tripeptide synthetase</fullName>
    </alternativeName>
    <alternativeName>
        <fullName evidence="1">UDP-N-acetylmuramyl-tripeptide synthetase</fullName>
    </alternativeName>
</protein>
<feature type="chain" id="PRO_1000012383" description="UDP-N-acetylmuramoyl-L-alanyl-D-glutamate--L-lysine ligase">
    <location>
        <begin position="1"/>
        <end position="494"/>
    </location>
</feature>
<feature type="short sequence motif" description="L-lysine recognition motif">
    <location>
        <begin position="406"/>
        <end position="409"/>
    </location>
</feature>
<feature type="binding site" evidence="1">
    <location>
        <position position="30"/>
    </location>
    <ligand>
        <name>UDP-N-acetyl-alpha-D-muramoyl-L-alanyl-D-glutamate</name>
        <dbReference type="ChEBI" id="CHEBI:83900"/>
    </ligand>
</feature>
<feature type="binding site" evidence="1">
    <location>
        <begin position="110"/>
        <end position="116"/>
    </location>
    <ligand>
        <name>ATP</name>
        <dbReference type="ChEBI" id="CHEBI:30616"/>
    </ligand>
</feature>
<feature type="binding site" evidence="1">
    <location>
        <begin position="152"/>
        <end position="153"/>
    </location>
    <ligand>
        <name>UDP-N-acetyl-alpha-D-muramoyl-L-alanyl-D-glutamate</name>
        <dbReference type="ChEBI" id="CHEBI:83900"/>
    </ligand>
</feature>
<feature type="binding site" evidence="1">
    <location>
        <position position="179"/>
    </location>
    <ligand>
        <name>UDP-N-acetyl-alpha-D-muramoyl-L-alanyl-D-glutamate</name>
        <dbReference type="ChEBI" id="CHEBI:83900"/>
    </ligand>
</feature>
<feature type="binding site" evidence="1">
    <location>
        <position position="187"/>
    </location>
    <ligand>
        <name>UDP-N-acetyl-alpha-D-muramoyl-L-alanyl-D-glutamate</name>
        <dbReference type="ChEBI" id="CHEBI:83900"/>
    </ligand>
</feature>
<feature type="modified residue" description="N6-carboxylysine" evidence="1">
    <location>
        <position position="219"/>
    </location>
</feature>
<comment type="function">
    <text evidence="1">Catalyzes the addition of L-lysine to the nucleotide precursor UDP-N-acetylmuramoyl-L-alanyl-D-glutamate (UMAG) in the biosynthesis of bacterial cell-wall peptidoglycan.</text>
</comment>
<comment type="catalytic activity">
    <reaction evidence="1">
        <text>UDP-N-acetyl-alpha-D-muramoyl-L-alanyl-D-glutamate + L-lysine + ATP = UDP-N-acetyl-alpha-D-muramoyl-L-alanyl-gamma-D-glutamyl-L-lysine + ADP + phosphate + H(+)</text>
        <dbReference type="Rhea" id="RHEA:17969"/>
        <dbReference type="ChEBI" id="CHEBI:15378"/>
        <dbReference type="ChEBI" id="CHEBI:30616"/>
        <dbReference type="ChEBI" id="CHEBI:32551"/>
        <dbReference type="ChEBI" id="CHEBI:43474"/>
        <dbReference type="ChEBI" id="CHEBI:83900"/>
        <dbReference type="ChEBI" id="CHEBI:83903"/>
        <dbReference type="ChEBI" id="CHEBI:456216"/>
        <dbReference type="EC" id="6.3.2.7"/>
    </reaction>
</comment>
<comment type="pathway">
    <text evidence="1">Cell wall biogenesis; peptidoglycan biosynthesis.</text>
</comment>
<comment type="subcellular location">
    <subcellularLocation>
        <location evidence="1">Cytoplasm</location>
    </subcellularLocation>
</comment>
<comment type="PTM">
    <text evidence="1">Carboxylation is probably crucial for Mg(2+) binding and, consequently, for the gamma-phosphate positioning of ATP.</text>
</comment>
<comment type="similarity">
    <text evidence="1">Belongs to the MurCDEF family. MurE subfamily.</text>
</comment>
<keyword id="KW-0067">ATP-binding</keyword>
<keyword id="KW-0131">Cell cycle</keyword>
<keyword id="KW-0132">Cell division</keyword>
<keyword id="KW-0133">Cell shape</keyword>
<keyword id="KW-0961">Cell wall biogenesis/degradation</keyword>
<keyword id="KW-0963">Cytoplasm</keyword>
<keyword id="KW-0436">Ligase</keyword>
<keyword id="KW-0547">Nucleotide-binding</keyword>
<keyword id="KW-0573">Peptidoglycan synthesis</keyword>
<proteinExistence type="inferred from homology"/>
<gene>
    <name evidence="1" type="primary">murE</name>
    <name type="ordered locus">SAB0884</name>
</gene>